<sequence length="39" mass="4032">MTPSLSAFLSSVILAVVVIVVPISAALVFVSTTDKIVRS</sequence>
<keyword id="KW-0150">Chloroplast</keyword>
<keyword id="KW-0472">Membrane</keyword>
<keyword id="KW-0602">Photosynthesis</keyword>
<keyword id="KW-0604">Photosystem II</keyword>
<keyword id="KW-0934">Plastid</keyword>
<keyword id="KW-0793">Thylakoid</keyword>
<keyword id="KW-0812">Transmembrane</keyword>
<keyword id="KW-1133">Transmembrane helix</keyword>
<feature type="chain" id="PRO_0000345386" description="Photosystem II reaction center protein X">
    <location>
        <begin position="1"/>
        <end position="39"/>
    </location>
</feature>
<feature type="transmembrane region" description="Helical" evidence="1">
    <location>
        <begin position="12"/>
        <end position="32"/>
    </location>
</feature>
<name>PSBX_EMIHU</name>
<reference key="1">
    <citation type="journal article" date="2005" name="DNA Res.">
        <title>The complete plastid genome sequence of the haptophyte Emiliania huxleyi: a comparison to other plastid genomes.</title>
        <authorList>
            <person name="Sanchez-Puerta M.V."/>
            <person name="Bachvaroff T.R."/>
            <person name="Delwiche C.F."/>
        </authorList>
    </citation>
    <scope>NUCLEOTIDE SEQUENCE [LARGE SCALE GENOMIC DNA]</scope>
    <source>
        <strain>CCMP373 / CSIRO-CS-57 / BT6</strain>
    </source>
</reference>
<organism>
    <name type="scientific">Emiliania huxleyi</name>
    <name type="common">Coccolithophore</name>
    <name type="synonym">Pontosphaera huxleyi</name>
    <dbReference type="NCBI Taxonomy" id="2903"/>
    <lineage>
        <taxon>Eukaryota</taxon>
        <taxon>Haptista</taxon>
        <taxon>Haptophyta</taxon>
        <taxon>Prymnesiophyceae</taxon>
        <taxon>Isochrysidales</taxon>
        <taxon>Noelaerhabdaceae</taxon>
        <taxon>Emiliania</taxon>
    </lineage>
</organism>
<comment type="function">
    <text evidence="1">Involved in the binding and/or turnover of quinones at the Q(B) site of photosystem II (PSII). PSII is a light-driven water plastoquinone oxidoreductase, using light energy to abstract electrons from H(2)O, generating a proton gradient subsequently used for ATP formation.</text>
</comment>
<comment type="subunit">
    <text evidence="1">PSII is composed of 1 copy each of membrane proteins PsbA, PsbB, PsbC, PsbD, PsbE, PsbF, PsbH, PsbI, PsbJ, PsbK, PsbL, PsbM, PsbT, PsbX, PsbY, PsbZ, Psb30/Ycf12, at least 3 peripheral proteins of the oxygen-evolving complex and a large number of cofactors. It forms dimeric complexes.</text>
</comment>
<comment type="subcellular location">
    <subcellularLocation>
        <location evidence="1">Plastid</location>
        <location evidence="1">Chloroplast thylakoid membrane</location>
        <topology evidence="1">Single-pass membrane protein</topology>
    </subcellularLocation>
</comment>
<comment type="similarity">
    <text evidence="1">Belongs to the PsbX family. Type 1 subfamily.</text>
</comment>
<dbReference type="EMBL" id="AY741371">
    <property type="protein sequence ID" value="AAX13828.1"/>
    <property type="molecule type" value="Genomic_DNA"/>
</dbReference>
<dbReference type="RefSeq" id="YP_277329.1">
    <property type="nucleotide sequence ID" value="NC_007288.1"/>
</dbReference>
<dbReference type="SMR" id="Q4G3D8"/>
<dbReference type="STRING" id="2903.Q4G3D8"/>
<dbReference type="GO" id="GO:0009535">
    <property type="term" value="C:chloroplast thylakoid membrane"/>
    <property type="evidence" value="ECO:0007669"/>
    <property type="project" value="UniProtKB-SubCell"/>
</dbReference>
<dbReference type="GO" id="GO:0009523">
    <property type="term" value="C:photosystem II"/>
    <property type="evidence" value="ECO:0007669"/>
    <property type="project" value="UniProtKB-KW"/>
</dbReference>
<dbReference type="GO" id="GO:0015979">
    <property type="term" value="P:photosynthesis"/>
    <property type="evidence" value="ECO:0007669"/>
    <property type="project" value="UniProtKB-UniRule"/>
</dbReference>
<dbReference type="Gene3D" id="1.20.5.510">
    <property type="entry name" value="Single helix bin"/>
    <property type="match status" value="1"/>
</dbReference>
<dbReference type="HAMAP" id="MF_01386">
    <property type="entry name" value="PSII_PsbX_1"/>
    <property type="match status" value="1"/>
</dbReference>
<dbReference type="InterPro" id="IPR009518">
    <property type="entry name" value="PSII_PsbX"/>
</dbReference>
<dbReference type="InterPro" id="IPR023431">
    <property type="entry name" value="PSII_PsbX_type_1_subfam"/>
</dbReference>
<dbReference type="Pfam" id="PF06596">
    <property type="entry name" value="PsbX"/>
    <property type="match status" value="1"/>
</dbReference>
<gene>
    <name evidence="1" type="primary">psbX</name>
</gene>
<protein>
    <recommendedName>
        <fullName evidence="1">Photosystem II reaction center protein X</fullName>
    </recommendedName>
</protein>
<geneLocation type="chloroplast"/>
<proteinExistence type="inferred from homology"/>
<accession>Q4G3D8</accession>
<evidence type="ECO:0000255" key="1">
    <source>
        <dbReference type="HAMAP-Rule" id="MF_01386"/>
    </source>
</evidence>